<name>PODXL_RABIT</name>
<dbReference type="EMBL" id="U35239">
    <property type="protein sequence ID" value="AAC48489.1"/>
    <property type="molecule type" value="mRNA"/>
</dbReference>
<dbReference type="RefSeq" id="NP_001076235.1">
    <property type="nucleotide sequence ID" value="NM_001082766.1"/>
</dbReference>
<dbReference type="FunCoup" id="Q28645">
    <property type="interactions" value="30"/>
</dbReference>
<dbReference type="IntAct" id="Q28645">
    <property type="interactions" value="1"/>
</dbReference>
<dbReference type="MINT" id="Q28645"/>
<dbReference type="STRING" id="9986.ENSOCUP00000021702"/>
<dbReference type="GlyCosmos" id="Q28645">
    <property type="glycosylation" value="3 sites, No reported glycans"/>
</dbReference>
<dbReference type="PaxDb" id="9986-ENSOCUP00000021702"/>
<dbReference type="GeneID" id="100009552"/>
<dbReference type="KEGG" id="ocu:100009552"/>
<dbReference type="CTD" id="5420"/>
<dbReference type="eggNOG" id="ENOG502S2JU">
    <property type="taxonomic scope" value="Eukaryota"/>
</dbReference>
<dbReference type="InParanoid" id="Q28645"/>
<dbReference type="OrthoDB" id="9948358at2759"/>
<dbReference type="Proteomes" id="UP000001811">
    <property type="component" value="Unplaced"/>
</dbReference>
<dbReference type="GO" id="GO:0016324">
    <property type="term" value="C:apical plasma membrane"/>
    <property type="evidence" value="ECO:0000250"/>
    <property type="project" value="UniProtKB"/>
</dbReference>
<dbReference type="GO" id="GO:0005737">
    <property type="term" value="C:cytoplasm"/>
    <property type="evidence" value="ECO:0000250"/>
    <property type="project" value="UniProtKB"/>
</dbReference>
<dbReference type="GO" id="GO:0030175">
    <property type="term" value="C:filopodium"/>
    <property type="evidence" value="ECO:0000250"/>
    <property type="project" value="UniProtKB"/>
</dbReference>
<dbReference type="GO" id="GO:0030027">
    <property type="term" value="C:lamellipodium"/>
    <property type="evidence" value="ECO:0000250"/>
    <property type="project" value="UniProtKB"/>
</dbReference>
<dbReference type="GO" id="GO:0045121">
    <property type="term" value="C:membrane raft"/>
    <property type="evidence" value="ECO:0007669"/>
    <property type="project" value="UniProtKB-SubCell"/>
</dbReference>
<dbReference type="GO" id="GO:0031528">
    <property type="term" value="C:microvillus membrane"/>
    <property type="evidence" value="ECO:0000250"/>
    <property type="project" value="UniProtKB"/>
</dbReference>
<dbReference type="GO" id="GO:0005886">
    <property type="term" value="C:plasma membrane"/>
    <property type="evidence" value="ECO:0000250"/>
    <property type="project" value="UniProtKB"/>
</dbReference>
<dbReference type="GO" id="GO:0001726">
    <property type="term" value="C:ruffle"/>
    <property type="evidence" value="ECO:0000250"/>
    <property type="project" value="UniProtKB"/>
</dbReference>
<dbReference type="GO" id="GO:0036057">
    <property type="term" value="C:slit diaphragm"/>
    <property type="evidence" value="ECO:0000250"/>
    <property type="project" value="UniProtKB"/>
</dbReference>
<dbReference type="GO" id="GO:0007155">
    <property type="term" value="P:cell adhesion"/>
    <property type="evidence" value="ECO:0007669"/>
    <property type="project" value="UniProtKB-KW"/>
</dbReference>
<dbReference type="GO" id="GO:0016477">
    <property type="term" value="P:cell migration"/>
    <property type="evidence" value="ECO:0000250"/>
    <property type="project" value="UniProtKB"/>
</dbReference>
<dbReference type="GO" id="GO:0072175">
    <property type="term" value="P:epithelial tube formation"/>
    <property type="evidence" value="ECO:0000250"/>
    <property type="project" value="UniProtKB"/>
</dbReference>
<dbReference type="GO" id="GO:0007162">
    <property type="term" value="P:negative regulation of cell adhesion"/>
    <property type="evidence" value="ECO:0000250"/>
    <property type="project" value="UniProtKB"/>
</dbReference>
<dbReference type="GO" id="GO:0022408">
    <property type="term" value="P:negative regulation of cell-cell adhesion"/>
    <property type="evidence" value="ECO:0000250"/>
    <property type="project" value="UniProtKB"/>
</dbReference>
<dbReference type="GO" id="GO:0072015">
    <property type="term" value="P:podocyte development"/>
    <property type="evidence" value="ECO:0000250"/>
    <property type="project" value="UniProtKB"/>
</dbReference>
<dbReference type="GO" id="GO:0030335">
    <property type="term" value="P:positive regulation of cell migration"/>
    <property type="evidence" value="ECO:0000250"/>
    <property type="project" value="UniProtKB"/>
</dbReference>
<dbReference type="GO" id="GO:0033634">
    <property type="term" value="P:positive regulation of cell-cell adhesion mediated by integrin"/>
    <property type="evidence" value="ECO:0000250"/>
    <property type="project" value="UniProtKB"/>
</dbReference>
<dbReference type="GO" id="GO:0032534">
    <property type="term" value="P:regulation of microvillus assembly"/>
    <property type="evidence" value="ECO:0000250"/>
    <property type="project" value="UniProtKB"/>
</dbReference>
<dbReference type="InterPro" id="IPR013836">
    <property type="entry name" value="CD34/Podocalyxin"/>
</dbReference>
<dbReference type="InterPro" id="IPR017403">
    <property type="entry name" value="PODXL"/>
</dbReference>
<dbReference type="PANTHER" id="PTHR12067">
    <property type="entry name" value="PODOCALYXIN"/>
    <property type="match status" value="1"/>
</dbReference>
<dbReference type="PANTHER" id="PTHR12067:SF5">
    <property type="entry name" value="PODOCALYXIN"/>
    <property type="match status" value="1"/>
</dbReference>
<dbReference type="Pfam" id="PF06365">
    <property type="entry name" value="CD34_antigen"/>
    <property type="match status" value="1"/>
</dbReference>
<dbReference type="PIRSF" id="PIRSF038143">
    <property type="entry name" value="Podocalyxin-like_p1"/>
    <property type="match status" value="1"/>
</dbReference>
<keyword id="KW-0130">Cell adhesion</keyword>
<keyword id="KW-1003">Cell membrane</keyword>
<keyword id="KW-0966">Cell projection</keyword>
<keyword id="KW-0325">Glycoprotein</keyword>
<keyword id="KW-0472">Membrane</keyword>
<keyword id="KW-0597">Phosphoprotein</keyword>
<keyword id="KW-1185">Reference proteome</keyword>
<keyword id="KW-0732">Signal</keyword>
<keyword id="KW-0812">Transmembrane</keyword>
<keyword id="KW-1133">Transmembrane helix</keyword>
<organism>
    <name type="scientific">Oryctolagus cuniculus</name>
    <name type="common">Rabbit</name>
    <dbReference type="NCBI Taxonomy" id="9986"/>
    <lineage>
        <taxon>Eukaryota</taxon>
        <taxon>Metazoa</taxon>
        <taxon>Chordata</taxon>
        <taxon>Craniata</taxon>
        <taxon>Vertebrata</taxon>
        <taxon>Euteleostomi</taxon>
        <taxon>Mammalia</taxon>
        <taxon>Eutheria</taxon>
        <taxon>Euarchontoglires</taxon>
        <taxon>Glires</taxon>
        <taxon>Lagomorpha</taxon>
        <taxon>Leporidae</taxon>
        <taxon>Oryctolagus</taxon>
    </lineage>
</organism>
<evidence type="ECO:0000250" key="1"/>
<evidence type="ECO:0000250" key="2">
    <source>
        <dbReference type="UniProtKB" id="O00592"/>
    </source>
</evidence>
<evidence type="ECO:0000250" key="3">
    <source>
        <dbReference type="UniProtKB" id="Q9R0M4"/>
    </source>
</evidence>
<evidence type="ECO:0000255" key="4"/>
<evidence type="ECO:0000256" key="5">
    <source>
        <dbReference type="SAM" id="MobiDB-lite"/>
    </source>
</evidence>
<evidence type="ECO:0000269" key="6">
    <source>
    </source>
</evidence>
<evidence type="ECO:0000269" key="7">
    <source>
    </source>
</evidence>
<evidence type="ECO:0000305" key="8"/>
<sequence length="551" mass="57041">MRSALALAALLLLLLSPPSLSQEKSPQPGPTPMATSTSTRPAPASAPAPKSSVAASVPAEQNTTPMTTKAPATQSPSASPGSSVENSAPAQGSTTTQQSLSVTTKAEAKDAGGVPTAHVTGSARPVTSGSQVAAQDPAASKAPSNHSITTKPLATEATSQAPRQTTDVGTPGPTAPPVTNSTSPDLLGHATPKPSEGPQLSFPTAAGSLGPVTGSGTGSGTLSTPQGKPATLTPVASSAETQGMPSPMPPSPASPSSSPFPSSPSPSPALQPSGPSAAGTEDTTGRGPTSSSTELASTALHGPSTLSPTSAVRDQRVSCGPPERPTEQLLILNLTRSSPCIHVFQRQSQGEGETEISMHSTDSLPEDKLVTLLCRAAKPTFNPAQDQCHVLLAPMLGSHAVVVKEITIKTNLLPTAVFELLKDRWDDLREEGVSDMQLGDQGPPEETEDRFSLPLIITIVCMASFLLLVAALYGCCHQRLSHRKDQQRLTEELQTVENGYHDNPTLEVMETSAEMQEKKVVNLNGELGDSWIVPLDNLTKDDLDEEEDTHL</sequence>
<proteinExistence type="evidence at protein level"/>
<feature type="signal peptide" evidence="4">
    <location>
        <begin position="1"/>
        <end position="21"/>
    </location>
</feature>
<feature type="chain" id="PRO_0000024756" description="Podocalyxin">
    <location>
        <begin position="22"/>
        <end position="551"/>
    </location>
</feature>
<feature type="topological domain" description="Extracellular" evidence="4">
    <location>
        <begin position="22"/>
        <end position="452"/>
    </location>
</feature>
<feature type="transmembrane region" description="Helical" evidence="4">
    <location>
        <begin position="453"/>
        <end position="473"/>
    </location>
</feature>
<feature type="topological domain" description="Cytoplasmic" evidence="4">
    <location>
        <begin position="474"/>
        <end position="551"/>
    </location>
</feature>
<feature type="region of interest" description="Disordered" evidence="5">
    <location>
        <begin position="18"/>
        <end position="324"/>
    </location>
</feature>
<feature type="compositionally biased region" description="Low complexity" evidence="5">
    <location>
        <begin position="32"/>
        <end position="59"/>
    </location>
</feature>
<feature type="compositionally biased region" description="Polar residues" evidence="5">
    <location>
        <begin position="60"/>
        <end position="90"/>
    </location>
</feature>
<feature type="compositionally biased region" description="Low complexity" evidence="5">
    <location>
        <begin position="91"/>
        <end position="104"/>
    </location>
</feature>
<feature type="compositionally biased region" description="Polar residues" evidence="5">
    <location>
        <begin position="142"/>
        <end position="164"/>
    </location>
</feature>
<feature type="compositionally biased region" description="Polar residues" evidence="5">
    <location>
        <begin position="234"/>
        <end position="244"/>
    </location>
</feature>
<feature type="compositionally biased region" description="Low complexity" evidence="5">
    <location>
        <begin position="289"/>
        <end position="300"/>
    </location>
</feature>
<feature type="modified residue" description="Phosphothreonine" evidence="3">
    <location>
        <position position="511"/>
    </location>
</feature>
<feature type="modified residue" description="Phosphoserine" evidence="2">
    <location>
        <position position="530"/>
    </location>
</feature>
<feature type="modified residue" description="Phosphothreonine" evidence="2">
    <location>
        <position position="549"/>
    </location>
</feature>
<feature type="glycosylation site" description="N-linked (GlcNAc...) asparagine" evidence="4">
    <location>
        <position position="145"/>
    </location>
</feature>
<feature type="glycosylation site" description="N-linked (GlcNAc...) asparagine" evidence="4">
    <location>
        <position position="180"/>
    </location>
</feature>
<feature type="glycosylation site" description="N-linked (GlcNAc...) asparagine" evidence="4">
    <location>
        <position position="333"/>
    </location>
</feature>
<reference key="1">
    <citation type="journal article" date="1995" name="J. Biol. Chem.">
        <title>Molecular cloning, expression, and characterization of podocalyxin-like protein 1 from rabbit as a transmembrane protein of glomerular podocytes and vascular endothelium.</title>
        <authorList>
            <person name="Kershaw D.B."/>
            <person name="Thomas P.E."/>
            <person name="Wharram B.L."/>
            <person name="Goyal M."/>
            <person name="Wiggins J.E."/>
            <person name="Whiteside C.I."/>
            <person name="Wiggins R.C."/>
        </authorList>
    </citation>
    <scope>NUCLEOTIDE SEQUENCE [MRNA]</scope>
    <scope>TISSUE SPECIFICITY</scope>
    <source>
        <strain>New Zealand white</strain>
    </source>
</reference>
<reference key="2">
    <citation type="journal article" date="2010" name="Nat. Cell Biol.">
        <title>A molecular network for de novo generation of the apical surface and lumen.</title>
        <authorList>
            <person name="Bryant D.M."/>
            <person name="Datta A."/>
            <person name="Rodriguez-Fraticelli A.E."/>
            <person name="Peraenen J."/>
            <person name="Martin-Belmonte F."/>
            <person name="Mostov K.E."/>
        </authorList>
    </citation>
    <scope>SUBCELLULAR LOCATION</scope>
</reference>
<gene>
    <name type="primary">PODXL</name>
    <name type="synonym">PCLP1</name>
</gene>
<protein>
    <recommendedName>
        <fullName>Podocalyxin</fullName>
    </recommendedName>
    <alternativeName>
        <fullName>Podocalyxin-like protein 1</fullName>
        <shortName>PC</shortName>
        <shortName>PCLP-1</shortName>
    </alternativeName>
</protein>
<comment type="function">
    <text>Involved in the regulation of both adhesion and cell morphology and cancer progression. Functions as an anti-adhesive molecule that maintains an open filtration pathway between neighboring foot processes in the podocyte by charge repulsion. Acts as a pro-adhesive molecule, enhancing the adherence of cells to immobilized ligands, increasing the rate of migration and cell-cell contacts in an integrin-dependent manner. Induces the formation of apical actin-dependent microvilli. Involved in the formation of a preapical plasma membrane subdomain to set up initial epithelial polarization and the apical lumen formation during renal tubulogenesis. Plays a role in cancer development and aggressiveness by inducing cell migration and invasion through its interaction with the actin-binding protein EZR. Affects EZR-dependent signaling events, leading to increased activities of the MAPK and PI3K pathways in cancer cells.</text>
</comment>
<comment type="subunit">
    <text evidence="1">Monomer; when associated with the membrane raft. Oligomer; when integrated in the apical membrane. Found in a complex with EZR, PODXL and NHERF2. Associates with the actin cytoskeleton through complex formation with EZR and NHERF2. Interacts (via the C-terminal PDZ-binding motif DTHL) with NHERF1 (via the PDZ domains); interaction is not detected in glomerular epithelium cells, take place early in the secretory pathway and is necessary for its apical membrane sorting. Interacts (via the C-terminal PDZ-binding motif DTHL) with NHERF2 (via the PDZ 1 domain); interaction is detected in glomerular epithelium cells. Interacts with EZR (By similarity).</text>
</comment>
<comment type="interaction">
    <interactant intactId="EBI-8375591">
        <id>Q28645</id>
    </interactant>
    <interactant intactId="EBI-1174758">
        <id>Q8SQG9</id>
        <label>NHERF2</label>
    </interactant>
    <organismsDiffer>false</organismsDiffer>
    <experiments>7</experiments>
</comment>
<comment type="subcellular location">
    <subcellularLocation>
        <location evidence="1">Apical cell membrane</location>
    </subcellularLocation>
    <subcellularLocation>
        <location evidence="1">Cell projection</location>
        <location evidence="1">Microvillus</location>
    </subcellularLocation>
    <subcellularLocation>
        <location evidence="1">Membrane raft</location>
    </subcellularLocation>
    <subcellularLocation>
        <location evidence="1">Cell projection</location>
        <location evidence="1">Lamellipodium</location>
    </subcellularLocation>
    <subcellularLocation>
        <location evidence="1">Cell projection</location>
        <location evidence="1">Filopodium</location>
    </subcellularLocation>
    <subcellularLocation>
        <location evidence="1">Cell projection</location>
        <location evidence="1">Ruffle</location>
    </subcellularLocation>
    <subcellularLocation>
        <location evidence="8">Membrane</location>
        <topology evidence="8">Single-pass type I membrane protein</topology>
    </subcellularLocation>
    <text evidence="1 6">In single attached epithelial cells is restricted to a preapical pole on the free plasma membrane whereas other apical and basolateral proteins are not yet polarized. Colocalizes with NHERF2 at the apical plasma membrane during epithelial polarization. Colocalizes with NHERF1 at the trans-Golgi network (transiently) and at the apical plasma membrane. Its association with the membrane raft is transient. Forms granular, punctuated pattern, forming patches, preferentially adopting a polar distribution, located on the migrating poles of the cell or forming clusters along the terminal ends of filipodia establishing contact with the endothelial cells. Colocalizes with the submembrane actin of lamellipodia, particularly associated with ruffles. Colocalizes with vinculin at protrusions of cells. Colocalizes with ITGB1. Colocalizes with EZR and NHERF2 at the apical cell membrane of glomerular epithelium cells. Colocalizes with actin filaments, EZR and NHERF1 in a punctate pattern at the apical cell surface where microvilli form (By similarity). Colocalizes with PARD3, PRKCI, EXOC5, OCLN, RAB11A and RAB8A in apical membrane initiation sites (AMIS) during the generation of apical surface and luminogenesis.</text>
</comment>
<comment type="tissue specificity">
    <text evidence="7">Glomerular epithelium cell (podocyte) and endothelial cells.</text>
</comment>
<comment type="domain">
    <text evidence="1">Both the O-glycan-rich domain of the extracellular domain and the C-terminus PDZ-binding motif (DTHL) in the cytoplasmic tail harbor an apical sorting signal. The cytoplasmic domain is necessary for the apical membrane targeting and renal tubulogenesis. The large highly anionic extracellular domain allows to maintain open filtration pathways between neighboring podocyte foot processes. The cytoplasmic C-terminus PDZ-binding motif (DTHL) is essential for interaction with NHERF1 and for targeting NHERF1 to the apical cell membrane. The extracellular domain is necessary for microvillus formation (By similarity).</text>
</comment>
<comment type="PTM">
    <text evidence="1">N- and O-linked glycosylated. Sialoglycoprotein (By similarity).</text>
</comment>
<comment type="similarity">
    <text evidence="8">Belongs to the podocalyxin family.</text>
</comment>
<accession>Q28645</accession>